<proteinExistence type="inferred from homology"/>
<gene>
    <name evidence="1" type="primary">argS</name>
    <name type="ordered locus">LACR_2323</name>
</gene>
<dbReference type="EC" id="6.1.1.19" evidence="1"/>
<dbReference type="EMBL" id="CP000425">
    <property type="protein sequence ID" value="ABJ73777.1"/>
    <property type="molecule type" value="Genomic_DNA"/>
</dbReference>
<dbReference type="RefSeq" id="WP_011677109.1">
    <property type="nucleotide sequence ID" value="NC_008527.1"/>
</dbReference>
<dbReference type="SMR" id="Q02W95"/>
<dbReference type="KEGG" id="llc:LACR_2323"/>
<dbReference type="HOGENOM" id="CLU_006406_6_1_9"/>
<dbReference type="Proteomes" id="UP000000240">
    <property type="component" value="Chromosome"/>
</dbReference>
<dbReference type="GO" id="GO:0005737">
    <property type="term" value="C:cytoplasm"/>
    <property type="evidence" value="ECO:0007669"/>
    <property type="project" value="UniProtKB-SubCell"/>
</dbReference>
<dbReference type="GO" id="GO:0004814">
    <property type="term" value="F:arginine-tRNA ligase activity"/>
    <property type="evidence" value="ECO:0007669"/>
    <property type="project" value="UniProtKB-UniRule"/>
</dbReference>
<dbReference type="GO" id="GO:0005524">
    <property type="term" value="F:ATP binding"/>
    <property type="evidence" value="ECO:0007669"/>
    <property type="project" value="UniProtKB-UniRule"/>
</dbReference>
<dbReference type="GO" id="GO:0006420">
    <property type="term" value="P:arginyl-tRNA aminoacylation"/>
    <property type="evidence" value="ECO:0007669"/>
    <property type="project" value="UniProtKB-UniRule"/>
</dbReference>
<dbReference type="CDD" id="cd07956">
    <property type="entry name" value="Anticodon_Ia_Arg"/>
    <property type="match status" value="1"/>
</dbReference>
<dbReference type="CDD" id="cd00671">
    <property type="entry name" value="ArgRS_core"/>
    <property type="match status" value="1"/>
</dbReference>
<dbReference type="FunFam" id="3.40.50.620:FF:000116">
    <property type="entry name" value="Arginine--tRNA ligase"/>
    <property type="match status" value="1"/>
</dbReference>
<dbReference type="FunFam" id="1.10.730.10:FF:000006">
    <property type="entry name" value="Arginyl-tRNA synthetase 2, mitochondrial"/>
    <property type="match status" value="1"/>
</dbReference>
<dbReference type="Gene3D" id="3.30.1360.70">
    <property type="entry name" value="Arginyl tRNA synthetase N-terminal domain"/>
    <property type="match status" value="1"/>
</dbReference>
<dbReference type="Gene3D" id="3.40.50.620">
    <property type="entry name" value="HUPs"/>
    <property type="match status" value="1"/>
</dbReference>
<dbReference type="Gene3D" id="1.10.730.10">
    <property type="entry name" value="Isoleucyl-tRNA Synthetase, Domain 1"/>
    <property type="match status" value="1"/>
</dbReference>
<dbReference type="HAMAP" id="MF_00123">
    <property type="entry name" value="Arg_tRNA_synth"/>
    <property type="match status" value="1"/>
</dbReference>
<dbReference type="InterPro" id="IPR001278">
    <property type="entry name" value="Arg-tRNA-ligase"/>
</dbReference>
<dbReference type="InterPro" id="IPR005148">
    <property type="entry name" value="Arg-tRNA-synth_N"/>
</dbReference>
<dbReference type="InterPro" id="IPR036695">
    <property type="entry name" value="Arg-tRNA-synth_N_sf"/>
</dbReference>
<dbReference type="InterPro" id="IPR035684">
    <property type="entry name" value="ArgRS_core"/>
</dbReference>
<dbReference type="InterPro" id="IPR008909">
    <property type="entry name" value="DALR_anticod-bd"/>
</dbReference>
<dbReference type="InterPro" id="IPR014729">
    <property type="entry name" value="Rossmann-like_a/b/a_fold"/>
</dbReference>
<dbReference type="InterPro" id="IPR009080">
    <property type="entry name" value="tRNAsynth_Ia_anticodon-bd"/>
</dbReference>
<dbReference type="NCBIfam" id="TIGR00456">
    <property type="entry name" value="argS"/>
    <property type="match status" value="1"/>
</dbReference>
<dbReference type="PANTHER" id="PTHR11956:SF5">
    <property type="entry name" value="ARGININE--TRNA LIGASE, CYTOPLASMIC"/>
    <property type="match status" value="1"/>
</dbReference>
<dbReference type="PANTHER" id="PTHR11956">
    <property type="entry name" value="ARGINYL-TRNA SYNTHETASE"/>
    <property type="match status" value="1"/>
</dbReference>
<dbReference type="Pfam" id="PF03485">
    <property type="entry name" value="Arg_tRNA_synt_N"/>
    <property type="match status" value="1"/>
</dbReference>
<dbReference type="Pfam" id="PF05746">
    <property type="entry name" value="DALR_1"/>
    <property type="match status" value="1"/>
</dbReference>
<dbReference type="Pfam" id="PF00750">
    <property type="entry name" value="tRNA-synt_1d"/>
    <property type="match status" value="1"/>
</dbReference>
<dbReference type="PRINTS" id="PR01038">
    <property type="entry name" value="TRNASYNTHARG"/>
</dbReference>
<dbReference type="SMART" id="SM01016">
    <property type="entry name" value="Arg_tRNA_synt_N"/>
    <property type="match status" value="1"/>
</dbReference>
<dbReference type="SMART" id="SM00836">
    <property type="entry name" value="DALR_1"/>
    <property type="match status" value="1"/>
</dbReference>
<dbReference type="SUPFAM" id="SSF47323">
    <property type="entry name" value="Anticodon-binding domain of a subclass of class I aminoacyl-tRNA synthetases"/>
    <property type="match status" value="1"/>
</dbReference>
<dbReference type="SUPFAM" id="SSF55190">
    <property type="entry name" value="Arginyl-tRNA synthetase (ArgRS), N-terminal 'additional' domain"/>
    <property type="match status" value="1"/>
</dbReference>
<dbReference type="SUPFAM" id="SSF52374">
    <property type="entry name" value="Nucleotidylyl transferase"/>
    <property type="match status" value="1"/>
</dbReference>
<reference key="1">
    <citation type="journal article" date="2006" name="Proc. Natl. Acad. Sci. U.S.A.">
        <title>Comparative genomics of the lactic acid bacteria.</title>
        <authorList>
            <person name="Makarova K.S."/>
            <person name="Slesarev A."/>
            <person name="Wolf Y.I."/>
            <person name="Sorokin A."/>
            <person name="Mirkin B."/>
            <person name="Koonin E.V."/>
            <person name="Pavlov A."/>
            <person name="Pavlova N."/>
            <person name="Karamychev V."/>
            <person name="Polouchine N."/>
            <person name="Shakhova V."/>
            <person name="Grigoriev I."/>
            <person name="Lou Y."/>
            <person name="Rohksar D."/>
            <person name="Lucas S."/>
            <person name="Huang K."/>
            <person name="Goodstein D.M."/>
            <person name="Hawkins T."/>
            <person name="Plengvidhya V."/>
            <person name="Welker D."/>
            <person name="Hughes J."/>
            <person name="Goh Y."/>
            <person name="Benson A."/>
            <person name="Baldwin K."/>
            <person name="Lee J.-H."/>
            <person name="Diaz-Muniz I."/>
            <person name="Dosti B."/>
            <person name="Smeianov V."/>
            <person name="Wechter W."/>
            <person name="Barabote R."/>
            <person name="Lorca G."/>
            <person name="Altermann E."/>
            <person name="Barrangou R."/>
            <person name="Ganesan B."/>
            <person name="Xie Y."/>
            <person name="Rawsthorne H."/>
            <person name="Tamir D."/>
            <person name="Parker C."/>
            <person name="Breidt F."/>
            <person name="Broadbent J.R."/>
            <person name="Hutkins R."/>
            <person name="O'Sullivan D."/>
            <person name="Steele J."/>
            <person name="Unlu G."/>
            <person name="Saier M.H. Jr."/>
            <person name="Klaenhammer T."/>
            <person name="Richardson P."/>
            <person name="Kozyavkin S."/>
            <person name="Weimer B.C."/>
            <person name="Mills D.A."/>
        </authorList>
    </citation>
    <scope>NUCLEOTIDE SEQUENCE [LARGE SCALE GENOMIC DNA]</scope>
    <source>
        <strain>SK11</strain>
    </source>
</reference>
<organism>
    <name type="scientific">Lactococcus lactis subsp. cremoris (strain SK11)</name>
    <dbReference type="NCBI Taxonomy" id="272622"/>
    <lineage>
        <taxon>Bacteria</taxon>
        <taxon>Bacillati</taxon>
        <taxon>Bacillota</taxon>
        <taxon>Bacilli</taxon>
        <taxon>Lactobacillales</taxon>
        <taxon>Streptococcaceae</taxon>
        <taxon>Lactococcus</taxon>
        <taxon>Lactococcus cremoris subsp. cremoris</taxon>
    </lineage>
</organism>
<name>SYR_LACLS</name>
<protein>
    <recommendedName>
        <fullName evidence="1">Arginine--tRNA ligase</fullName>
        <ecNumber evidence="1">6.1.1.19</ecNumber>
    </recommendedName>
    <alternativeName>
        <fullName evidence="1">Arginyl-tRNA synthetase</fullName>
        <shortName evidence="1">ArgRS</shortName>
    </alternativeName>
</protein>
<evidence type="ECO:0000255" key="1">
    <source>
        <dbReference type="HAMAP-Rule" id="MF_00123"/>
    </source>
</evidence>
<comment type="catalytic activity">
    <reaction evidence="1">
        <text>tRNA(Arg) + L-arginine + ATP = L-arginyl-tRNA(Arg) + AMP + diphosphate</text>
        <dbReference type="Rhea" id="RHEA:20301"/>
        <dbReference type="Rhea" id="RHEA-COMP:9658"/>
        <dbReference type="Rhea" id="RHEA-COMP:9673"/>
        <dbReference type="ChEBI" id="CHEBI:30616"/>
        <dbReference type="ChEBI" id="CHEBI:32682"/>
        <dbReference type="ChEBI" id="CHEBI:33019"/>
        <dbReference type="ChEBI" id="CHEBI:78442"/>
        <dbReference type="ChEBI" id="CHEBI:78513"/>
        <dbReference type="ChEBI" id="CHEBI:456215"/>
        <dbReference type="EC" id="6.1.1.19"/>
    </reaction>
</comment>
<comment type="subunit">
    <text evidence="1">Monomer.</text>
</comment>
<comment type="subcellular location">
    <subcellularLocation>
        <location evidence="1">Cytoplasm</location>
    </subcellularLocation>
</comment>
<comment type="similarity">
    <text evidence="1">Belongs to the class-I aminoacyl-tRNA synthetase family.</text>
</comment>
<feature type="chain" id="PRO_1000018051" description="Arginine--tRNA ligase">
    <location>
        <begin position="1"/>
        <end position="564"/>
    </location>
</feature>
<feature type="short sequence motif" description="'HIGH' region">
    <location>
        <begin position="122"/>
        <end position="132"/>
    </location>
</feature>
<accession>Q02W95</accession>
<sequence length="564" mass="62917">MDEKQLVSQALSAAIDGVLGVEQIAAIIEKPKSSDLGDLAFPAFQLAKTLRKSPQIIAGEIAEKIDTKGFEKVIAVGPYVNFFLDKNATASEVIREVLTEGEHYGDANIGEGGNVPIDMSAPNIAKPFSIGHLRSTVIGDSIAKIYEKLGYQPIKINHLGDWGKQFGLLITAYKKYGDEATITANPIDELLKLYVKINAEAKEDPEVDEEGRQWFLKMEQGDEEALRIWKWFSDVSLIEFNRIYGKLGVTFDHFMGESFYSDKMDAIVEDLENKNLLHESKGALIVDLEKYNLNPALIKKTDGATLYITRDLATAAYRKKTFNFVKSLYVVGGEQTNHFKQLKAVLKEAGYDWSDDMVHVPFGMVTQGGKKFSTRKGHVVKLEMALDEAVDRAEKQIEAKNPNLENKEEVAKQVGVGAVKFYDLKTDRNNGYDFDLDEMVSFEGETGPYVQYAHARIQSILRKANRKVNIDNISLVVSDAEAWEIVKALKEFPNIVKRAADNYEPSIIAKYAISLAQAFNKYYAHVRILEDDAQLDGRLALISATSIVLKEALRLLGVAAPENM</sequence>
<keyword id="KW-0030">Aminoacyl-tRNA synthetase</keyword>
<keyword id="KW-0067">ATP-binding</keyword>
<keyword id="KW-0963">Cytoplasm</keyword>
<keyword id="KW-0436">Ligase</keyword>
<keyword id="KW-0547">Nucleotide-binding</keyword>
<keyword id="KW-0648">Protein biosynthesis</keyword>